<reference key="1">
    <citation type="journal article" date="2007" name="DNA Res.">
        <title>Complete genomic structure of the bloom-forming toxic cyanobacterium Microcystis aeruginosa NIES-843.</title>
        <authorList>
            <person name="Kaneko T."/>
            <person name="Nakajima N."/>
            <person name="Okamoto S."/>
            <person name="Suzuki I."/>
            <person name="Tanabe Y."/>
            <person name="Tamaoki M."/>
            <person name="Nakamura Y."/>
            <person name="Kasai F."/>
            <person name="Watanabe A."/>
            <person name="Kawashima K."/>
            <person name="Kishida Y."/>
            <person name="Ono A."/>
            <person name="Shimizu Y."/>
            <person name="Takahashi C."/>
            <person name="Minami C."/>
            <person name="Fujishiro T."/>
            <person name="Kohara M."/>
            <person name="Katoh M."/>
            <person name="Nakazaki N."/>
            <person name="Nakayama S."/>
            <person name="Yamada M."/>
            <person name="Tabata S."/>
            <person name="Watanabe M.M."/>
        </authorList>
    </citation>
    <scope>NUCLEOTIDE SEQUENCE [LARGE SCALE GENOMIC DNA]</scope>
    <source>
        <strain>NIES-843 / IAM M-247</strain>
    </source>
</reference>
<evidence type="ECO:0000255" key="1">
    <source>
        <dbReference type="HAMAP-Rule" id="MF_01344"/>
    </source>
</evidence>
<organism>
    <name type="scientific">Microcystis aeruginosa (strain NIES-843 / IAM M-2473)</name>
    <dbReference type="NCBI Taxonomy" id="449447"/>
    <lineage>
        <taxon>Bacteria</taxon>
        <taxon>Bacillati</taxon>
        <taxon>Cyanobacteriota</taxon>
        <taxon>Cyanophyceae</taxon>
        <taxon>Oscillatoriophycideae</taxon>
        <taxon>Chroococcales</taxon>
        <taxon>Microcystaceae</taxon>
        <taxon>Microcystis</taxon>
    </lineage>
</organism>
<comment type="function">
    <text evidence="1">Component of the cytochrome b6-f complex, which mediates electron transfer between photosystem II (PSII) and photosystem I (PSI), cyclic electron flow around PSI, and state transitions.</text>
</comment>
<comment type="subunit">
    <text evidence="1">The 4 large subunits of the cytochrome b6-f complex are cytochrome b6, subunit IV (17 kDa polypeptide, PetD), cytochrome f and the Rieske protein, while the 4 small subunits are PetG, PetL, PetM and PetN. The complex functions as a dimer.</text>
</comment>
<comment type="subcellular location">
    <subcellularLocation>
        <location evidence="1">Cellular thylakoid membrane</location>
        <topology evidence="1">Multi-pass membrane protein</topology>
    </subcellularLocation>
</comment>
<comment type="similarity">
    <text evidence="1">Belongs to the cytochrome b family. PetD subfamily.</text>
</comment>
<name>PETD_MICAN</name>
<dbReference type="EMBL" id="AP009552">
    <property type="protein sequence ID" value="BAG03178.1"/>
    <property type="molecule type" value="Genomic_DNA"/>
</dbReference>
<dbReference type="RefSeq" id="WP_002738373.1">
    <property type="nucleotide sequence ID" value="NC_010296.1"/>
</dbReference>
<dbReference type="SMR" id="B0JM93"/>
<dbReference type="STRING" id="449447.MAE_33560"/>
<dbReference type="PaxDb" id="449447-MAE_33560"/>
<dbReference type="EnsemblBacteria" id="BAG03178">
    <property type="protein sequence ID" value="BAG03178"/>
    <property type="gene ID" value="MAE_33560"/>
</dbReference>
<dbReference type="KEGG" id="mar:MAE_33560"/>
<dbReference type="eggNOG" id="COG1290">
    <property type="taxonomic scope" value="Bacteria"/>
</dbReference>
<dbReference type="HOGENOM" id="CLU_112652_0_0_3"/>
<dbReference type="BioCyc" id="MAER449447:MAE_RS14485-MONOMER"/>
<dbReference type="Proteomes" id="UP000001510">
    <property type="component" value="Chromosome"/>
</dbReference>
<dbReference type="GO" id="GO:0031676">
    <property type="term" value="C:plasma membrane-derived thylakoid membrane"/>
    <property type="evidence" value="ECO:0007669"/>
    <property type="project" value="UniProtKB-SubCell"/>
</dbReference>
<dbReference type="GO" id="GO:0045158">
    <property type="term" value="F:electron transporter, transferring electrons within cytochrome b6/f complex of photosystem II activity"/>
    <property type="evidence" value="ECO:0007669"/>
    <property type="project" value="UniProtKB-UniRule"/>
</dbReference>
<dbReference type="GO" id="GO:0045156">
    <property type="term" value="F:electron transporter, transferring electrons within the cyclic electron transport pathway of photosynthesis activity"/>
    <property type="evidence" value="ECO:0007669"/>
    <property type="project" value="InterPro"/>
</dbReference>
<dbReference type="GO" id="GO:0008121">
    <property type="term" value="F:ubiquinol-cytochrome-c reductase activity"/>
    <property type="evidence" value="ECO:0007669"/>
    <property type="project" value="TreeGrafter"/>
</dbReference>
<dbReference type="GO" id="GO:0009767">
    <property type="term" value="P:photosynthetic electron transport chain"/>
    <property type="evidence" value="ECO:0007669"/>
    <property type="project" value="InterPro"/>
</dbReference>
<dbReference type="CDD" id="cd00290">
    <property type="entry name" value="cytochrome_b_C"/>
    <property type="match status" value="1"/>
</dbReference>
<dbReference type="FunFam" id="1.10.287.980:FF:000001">
    <property type="entry name" value="Cytochrome b6-f complex subunit 4"/>
    <property type="match status" value="1"/>
</dbReference>
<dbReference type="FunFam" id="1.20.5.510:FF:000002">
    <property type="entry name" value="Cytochrome b6-f complex subunit 4"/>
    <property type="match status" value="1"/>
</dbReference>
<dbReference type="Gene3D" id="1.10.287.980">
    <property type="entry name" value="plastocyanin oxidoreductase"/>
    <property type="match status" value="1"/>
</dbReference>
<dbReference type="Gene3D" id="1.20.5.510">
    <property type="entry name" value="Single helix bin"/>
    <property type="match status" value="1"/>
</dbReference>
<dbReference type="HAMAP" id="MF_01344">
    <property type="entry name" value="Cytb6_f_subIV"/>
    <property type="match status" value="1"/>
</dbReference>
<dbReference type="InterPro" id="IPR005798">
    <property type="entry name" value="Cyt_b/b6_C"/>
</dbReference>
<dbReference type="InterPro" id="IPR036150">
    <property type="entry name" value="Cyt_b/b6_C_sf"/>
</dbReference>
<dbReference type="InterPro" id="IPR005870">
    <property type="entry name" value="Cyt_b6/f_cplx_suIV"/>
</dbReference>
<dbReference type="InterPro" id="IPR048260">
    <property type="entry name" value="Cytochrome_b_C_euk/bac"/>
</dbReference>
<dbReference type="NCBIfam" id="TIGR01156">
    <property type="entry name" value="cytb6_f_IV"/>
    <property type="match status" value="1"/>
</dbReference>
<dbReference type="PANTHER" id="PTHR19271">
    <property type="entry name" value="CYTOCHROME B"/>
    <property type="match status" value="1"/>
</dbReference>
<dbReference type="PANTHER" id="PTHR19271:SF41">
    <property type="entry name" value="CYTOCHROME B_B6 C-TERMINAL REGION PROFILE DOMAIN-CONTAINING PROTEIN"/>
    <property type="match status" value="1"/>
</dbReference>
<dbReference type="Pfam" id="PF00032">
    <property type="entry name" value="Cytochrom_B_C"/>
    <property type="match status" value="1"/>
</dbReference>
<dbReference type="PIRSF" id="PIRSF000033">
    <property type="entry name" value="B6f_17K"/>
    <property type="match status" value="1"/>
</dbReference>
<dbReference type="SUPFAM" id="SSF81648">
    <property type="entry name" value="a domain/subunit of cytochrome bc1 complex (Ubiquinol-cytochrome c reductase)"/>
    <property type="match status" value="1"/>
</dbReference>
<dbReference type="PROSITE" id="PS51003">
    <property type="entry name" value="CYTB_CTER"/>
    <property type="match status" value="1"/>
</dbReference>
<gene>
    <name evidence="1" type="primary">petD</name>
    <name type="ordered locus">MAE_33560</name>
</gene>
<keyword id="KW-0249">Electron transport</keyword>
<keyword id="KW-0472">Membrane</keyword>
<keyword id="KW-0602">Photosynthesis</keyword>
<keyword id="KW-0793">Thylakoid</keyword>
<keyword id="KW-0812">Transmembrane</keyword>
<keyword id="KW-1133">Transmembrane helix</keyword>
<keyword id="KW-0813">Transport</keyword>
<sequence>MSTLKKPDLSDPALRAKLAKGMGHNYYGEPAWPNDLLYVFPVVIFGTIGLCTGLAIMDPTMIGEPADPFATPLEILPEWYLYPVFQILRILPNKLLGIACMAGVPLGLMLVPFIESVNKFQNPFRRPVATAIFLFGTVVTIWLGIGATFPIDISLTLGLF</sequence>
<feature type="chain" id="PRO_1000143203" description="Cytochrome b6-f complex subunit 4">
    <location>
        <begin position="1"/>
        <end position="160"/>
    </location>
</feature>
<feature type="transmembrane region" description="Helical" evidence="1">
    <location>
        <begin position="36"/>
        <end position="56"/>
    </location>
</feature>
<feature type="transmembrane region" description="Helical" evidence="1">
    <location>
        <begin position="95"/>
        <end position="115"/>
    </location>
</feature>
<feature type="transmembrane region" description="Helical" evidence="1">
    <location>
        <begin position="131"/>
        <end position="151"/>
    </location>
</feature>
<accession>B0JM93</accession>
<proteinExistence type="inferred from homology"/>
<protein>
    <recommendedName>
        <fullName evidence="1">Cytochrome b6-f complex subunit 4</fullName>
    </recommendedName>
    <alternativeName>
        <fullName evidence="1">17 kDa polypeptide</fullName>
    </alternativeName>
</protein>